<sequence length="235" mass="25153">MLTLIAILAISYLVGAIPTGIMAGKMLKGIDIRQFGSGNAGGTNAFRVLGWKAGLAVTLLDILKGIVAAVSIVAFFRHHPVGAFPDINEVALRLLAGMSAVIGHVFTVFAGFKGGKGVSTAAGMLIGIAPVSMLIVIGIFLLTVYVSRYVSVASILAAIAFPLIIAIRKYIFELGGGLDYYVKLFGERFSFHDSLDYHLMIFGLIVALAILYTHRANIRRLLSGTENRIKFGRHS</sequence>
<proteinExistence type="inferred from homology"/>
<comment type="function">
    <text evidence="1">Catalyzes the transfer of an acyl group from acyl-phosphate (acyl-PO(4)) to glycerol-3-phosphate (G3P) to form lysophosphatidic acid (LPA). This enzyme utilizes acyl-phosphate as fatty acyl donor, but not acyl-CoA or acyl-ACP.</text>
</comment>
<comment type="catalytic activity">
    <reaction evidence="1">
        <text>an acyl phosphate + sn-glycerol 3-phosphate = a 1-acyl-sn-glycero-3-phosphate + phosphate</text>
        <dbReference type="Rhea" id="RHEA:34075"/>
        <dbReference type="ChEBI" id="CHEBI:43474"/>
        <dbReference type="ChEBI" id="CHEBI:57597"/>
        <dbReference type="ChEBI" id="CHEBI:57970"/>
        <dbReference type="ChEBI" id="CHEBI:59918"/>
        <dbReference type="EC" id="2.3.1.275"/>
    </reaction>
</comment>
<comment type="pathway">
    <text evidence="1">Lipid metabolism; phospholipid metabolism.</text>
</comment>
<comment type="subunit">
    <text evidence="1">Probably interacts with PlsX.</text>
</comment>
<comment type="subcellular location">
    <subcellularLocation>
        <location evidence="1">Cell inner membrane</location>
        <topology evidence="1">Multi-pass membrane protein</topology>
    </subcellularLocation>
</comment>
<comment type="similarity">
    <text evidence="1">Belongs to the PlsY family.</text>
</comment>
<gene>
    <name evidence="1" type="primary">plsY</name>
    <name type="ordered locus">Cpha266_2581</name>
</gene>
<reference key="1">
    <citation type="submission" date="2006-12" db="EMBL/GenBank/DDBJ databases">
        <title>Complete sequence of Chlorobium phaeobacteroides DSM 266.</title>
        <authorList>
            <consortium name="US DOE Joint Genome Institute"/>
            <person name="Copeland A."/>
            <person name="Lucas S."/>
            <person name="Lapidus A."/>
            <person name="Barry K."/>
            <person name="Detter J.C."/>
            <person name="Glavina del Rio T."/>
            <person name="Hammon N."/>
            <person name="Israni S."/>
            <person name="Pitluck S."/>
            <person name="Goltsman E."/>
            <person name="Schmutz J."/>
            <person name="Larimer F."/>
            <person name="Land M."/>
            <person name="Hauser L."/>
            <person name="Mikhailova N."/>
            <person name="Li T."/>
            <person name="Overmann J."/>
            <person name="Bryant D.A."/>
            <person name="Richardson P."/>
        </authorList>
    </citation>
    <scope>NUCLEOTIDE SEQUENCE [LARGE SCALE GENOMIC DNA]</scope>
    <source>
        <strain>DSM 266 / SMG 266 / 2430</strain>
    </source>
</reference>
<protein>
    <recommendedName>
        <fullName evidence="1">Glycerol-3-phosphate acyltransferase</fullName>
    </recommendedName>
    <alternativeName>
        <fullName evidence="1">Acyl-PO4 G3P acyltransferase</fullName>
    </alternativeName>
    <alternativeName>
        <fullName evidence="1">Acyl-phosphate--glycerol-3-phosphate acyltransferase</fullName>
    </alternativeName>
    <alternativeName>
        <fullName evidence="1">G3P acyltransferase</fullName>
        <shortName evidence="1">GPAT</shortName>
        <ecNumber evidence="1">2.3.1.275</ecNumber>
    </alternativeName>
    <alternativeName>
        <fullName evidence="1">Lysophosphatidic acid synthase</fullName>
        <shortName evidence="1">LPA synthase</shortName>
    </alternativeName>
</protein>
<feature type="chain" id="PRO_1000064166" description="Glycerol-3-phosphate acyltransferase">
    <location>
        <begin position="1"/>
        <end position="235"/>
    </location>
</feature>
<feature type="transmembrane region" description="Helical" evidence="1">
    <location>
        <begin position="4"/>
        <end position="24"/>
    </location>
</feature>
<feature type="transmembrane region" description="Helical" evidence="1">
    <location>
        <begin position="56"/>
        <end position="76"/>
    </location>
</feature>
<feature type="transmembrane region" description="Helical" evidence="1">
    <location>
        <begin position="94"/>
        <end position="114"/>
    </location>
</feature>
<feature type="transmembrane region" description="Helical" evidence="1">
    <location>
        <begin position="122"/>
        <end position="142"/>
    </location>
</feature>
<feature type="transmembrane region" description="Helical" evidence="1">
    <location>
        <begin position="152"/>
        <end position="172"/>
    </location>
</feature>
<feature type="transmembrane region" description="Helical" evidence="1">
    <location>
        <begin position="191"/>
        <end position="211"/>
    </location>
</feature>
<evidence type="ECO:0000255" key="1">
    <source>
        <dbReference type="HAMAP-Rule" id="MF_01043"/>
    </source>
</evidence>
<dbReference type="EC" id="2.3.1.275" evidence="1"/>
<dbReference type="EMBL" id="CP000492">
    <property type="protein sequence ID" value="ABL66569.1"/>
    <property type="molecule type" value="Genomic_DNA"/>
</dbReference>
<dbReference type="RefSeq" id="WP_011746344.1">
    <property type="nucleotide sequence ID" value="NC_008639.1"/>
</dbReference>
<dbReference type="SMR" id="A1BJJ2"/>
<dbReference type="STRING" id="290317.Cpha266_2581"/>
<dbReference type="KEGG" id="cph:Cpha266_2581"/>
<dbReference type="eggNOG" id="COG0344">
    <property type="taxonomic scope" value="Bacteria"/>
</dbReference>
<dbReference type="HOGENOM" id="CLU_081254_3_0_10"/>
<dbReference type="OrthoDB" id="9777124at2"/>
<dbReference type="UniPathway" id="UPA00085"/>
<dbReference type="Proteomes" id="UP000008701">
    <property type="component" value="Chromosome"/>
</dbReference>
<dbReference type="GO" id="GO:0005886">
    <property type="term" value="C:plasma membrane"/>
    <property type="evidence" value="ECO:0007669"/>
    <property type="project" value="UniProtKB-SubCell"/>
</dbReference>
<dbReference type="GO" id="GO:0043772">
    <property type="term" value="F:acyl-phosphate glycerol-3-phosphate acyltransferase activity"/>
    <property type="evidence" value="ECO:0007669"/>
    <property type="project" value="UniProtKB-UniRule"/>
</dbReference>
<dbReference type="GO" id="GO:0008654">
    <property type="term" value="P:phospholipid biosynthetic process"/>
    <property type="evidence" value="ECO:0007669"/>
    <property type="project" value="UniProtKB-UniRule"/>
</dbReference>
<dbReference type="HAMAP" id="MF_01043">
    <property type="entry name" value="PlsY"/>
    <property type="match status" value="1"/>
</dbReference>
<dbReference type="InterPro" id="IPR003811">
    <property type="entry name" value="G3P_acylTferase_PlsY"/>
</dbReference>
<dbReference type="NCBIfam" id="TIGR00023">
    <property type="entry name" value="glycerol-3-phosphate 1-O-acyltransferase PlsY"/>
    <property type="match status" value="1"/>
</dbReference>
<dbReference type="PANTHER" id="PTHR30309:SF0">
    <property type="entry name" value="GLYCEROL-3-PHOSPHATE ACYLTRANSFERASE-RELATED"/>
    <property type="match status" value="1"/>
</dbReference>
<dbReference type="PANTHER" id="PTHR30309">
    <property type="entry name" value="INNER MEMBRANE PROTEIN YGIH"/>
    <property type="match status" value="1"/>
</dbReference>
<dbReference type="Pfam" id="PF02660">
    <property type="entry name" value="G3P_acyltransf"/>
    <property type="match status" value="1"/>
</dbReference>
<dbReference type="SMART" id="SM01207">
    <property type="entry name" value="G3P_acyltransf"/>
    <property type="match status" value="1"/>
</dbReference>
<name>PLSY_CHLPD</name>
<organism>
    <name type="scientific">Chlorobium phaeobacteroides (strain DSM 266 / SMG 266 / 2430)</name>
    <dbReference type="NCBI Taxonomy" id="290317"/>
    <lineage>
        <taxon>Bacteria</taxon>
        <taxon>Pseudomonadati</taxon>
        <taxon>Chlorobiota</taxon>
        <taxon>Chlorobiia</taxon>
        <taxon>Chlorobiales</taxon>
        <taxon>Chlorobiaceae</taxon>
        <taxon>Chlorobium/Pelodictyon group</taxon>
        <taxon>Chlorobium</taxon>
    </lineage>
</organism>
<accession>A1BJJ2</accession>
<keyword id="KW-0997">Cell inner membrane</keyword>
<keyword id="KW-1003">Cell membrane</keyword>
<keyword id="KW-0444">Lipid biosynthesis</keyword>
<keyword id="KW-0443">Lipid metabolism</keyword>
<keyword id="KW-0472">Membrane</keyword>
<keyword id="KW-0594">Phospholipid biosynthesis</keyword>
<keyword id="KW-1208">Phospholipid metabolism</keyword>
<keyword id="KW-1185">Reference proteome</keyword>
<keyword id="KW-0808">Transferase</keyword>
<keyword id="KW-0812">Transmembrane</keyword>
<keyword id="KW-1133">Transmembrane helix</keyword>